<sequence>MEFSVKSGSPEKQRSACIVVGVFEPRRLSPIAEQLDKISDGYISALLRRGELEGKPGQTLLLHHVPNVLSERILLIGCGKERELDERQYKQVIQKTINTLNDTGSMEAVCFLTELHVKGRNNYWKVRQAVETAKETLYSFDQLKTNKSEPRRPLRKMVFNVPTRRELTSGERAIQHGLAIAAGIKAAKDLGNMPPNICNAAYLASQARQLADSYSKNVITRVIGEQQMKELGMHSYLAVGQGSQNESLMSVIEYKGNASEDARPIVLVGKGLTFDSGGISIKPSEGMDEMKYDMCGAAAVYGVMRMVAELQLPINVIGVLAGCENMPGGRAYRPGDVLTTMSGQTVEVLNTDAEGRLVLCDVLTYVERFEPEAVIDVATLTGACVIALGHHITGLMANHNPLAHELIAASEQSGDRAWRLPLGDEYQEQLESNFADMANIGGRPGGAITAGCFLSRFTRKYNWAHLDIAGTAWRSGKAKGATGRPVALLAQFLLNRAGFNGEE</sequence>
<dbReference type="EC" id="3.4.11.1"/>
<dbReference type="EC" id="3.4.11.10"/>
<dbReference type="EMBL" id="X15130">
    <property type="protein sequence ID" value="CAA33225.1"/>
    <property type="molecule type" value="Genomic_DNA"/>
</dbReference>
<dbReference type="EMBL" id="X86443">
    <property type="protein sequence ID" value="CAA60164.1"/>
    <property type="molecule type" value="Genomic_DNA"/>
</dbReference>
<dbReference type="EMBL" id="U14003">
    <property type="protein sequence ID" value="AAA97157.1"/>
    <property type="molecule type" value="Genomic_DNA"/>
</dbReference>
<dbReference type="EMBL" id="U00096">
    <property type="protein sequence ID" value="AAC77217.1"/>
    <property type="molecule type" value="Genomic_DNA"/>
</dbReference>
<dbReference type="EMBL" id="AP009048">
    <property type="protein sequence ID" value="BAE78257.1"/>
    <property type="molecule type" value="Genomic_DNA"/>
</dbReference>
<dbReference type="PIR" id="S04462">
    <property type="entry name" value="APECA"/>
</dbReference>
<dbReference type="RefSeq" id="NP_418681.1">
    <property type="nucleotide sequence ID" value="NC_000913.3"/>
</dbReference>
<dbReference type="RefSeq" id="WP_000397144.1">
    <property type="nucleotide sequence ID" value="NZ_STEB01000013.1"/>
</dbReference>
<dbReference type="PDB" id="1GYT">
    <property type="method" value="X-ray"/>
    <property type="resolution" value="2.50 A"/>
    <property type="chains" value="A/B/C/D/E/F/G/H/I/J/K/L=1-503"/>
</dbReference>
<dbReference type="PDBsum" id="1GYT"/>
<dbReference type="SMR" id="P68767"/>
<dbReference type="BioGRID" id="4262726">
    <property type="interactions" value="127"/>
</dbReference>
<dbReference type="DIP" id="DIP-47860N"/>
<dbReference type="FunCoup" id="P68767">
    <property type="interactions" value="637"/>
</dbReference>
<dbReference type="IntAct" id="P68767">
    <property type="interactions" value="5"/>
</dbReference>
<dbReference type="STRING" id="511145.b4260"/>
<dbReference type="MEROPS" id="M17.003"/>
<dbReference type="MoonProt" id="P68767"/>
<dbReference type="jPOST" id="P68767"/>
<dbReference type="PaxDb" id="511145-b4260"/>
<dbReference type="EnsemblBacteria" id="AAC77217">
    <property type="protein sequence ID" value="AAC77217"/>
    <property type="gene ID" value="b4260"/>
</dbReference>
<dbReference type="GeneID" id="93777558"/>
<dbReference type="GeneID" id="948791"/>
<dbReference type="KEGG" id="ecj:JW4217"/>
<dbReference type="KEGG" id="eco:b4260"/>
<dbReference type="KEGG" id="ecoc:C3026_22980"/>
<dbReference type="PATRIC" id="fig|1411691.4.peg.2444"/>
<dbReference type="EchoBASE" id="EB0688"/>
<dbReference type="eggNOG" id="COG0260">
    <property type="taxonomic scope" value="Bacteria"/>
</dbReference>
<dbReference type="HOGENOM" id="CLU_013734_2_2_6"/>
<dbReference type="InParanoid" id="P68767"/>
<dbReference type="OMA" id="WPMPLPE"/>
<dbReference type="OrthoDB" id="9809354at2"/>
<dbReference type="PhylomeDB" id="P68767"/>
<dbReference type="BioCyc" id="EcoCyc:EG10694-MONOMER"/>
<dbReference type="BioCyc" id="MetaCyc:EG10694-MONOMER"/>
<dbReference type="BRENDA" id="3.4.11.1">
    <property type="organism ID" value="2026"/>
</dbReference>
<dbReference type="EvolutionaryTrace" id="P68767"/>
<dbReference type="PRO" id="PR:P68767"/>
<dbReference type="Proteomes" id="UP000000625">
    <property type="component" value="Chromosome"/>
</dbReference>
<dbReference type="GO" id="GO:0005737">
    <property type="term" value="C:cytoplasm"/>
    <property type="evidence" value="ECO:0000318"/>
    <property type="project" value="GO_Central"/>
</dbReference>
<dbReference type="GO" id="GO:0004177">
    <property type="term" value="F:aminopeptidase activity"/>
    <property type="evidence" value="ECO:0000314"/>
    <property type="project" value="EcoliWiki"/>
</dbReference>
<dbReference type="GO" id="GO:0003677">
    <property type="term" value="F:DNA binding"/>
    <property type="evidence" value="ECO:0000314"/>
    <property type="project" value="EcoliWiki"/>
</dbReference>
<dbReference type="GO" id="GO:0030145">
    <property type="term" value="F:manganese ion binding"/>
    <property type="evidence" value="ECO:0007669"/>
    <property type="project" value="UniProtKB-UniRule"/>
</dbReference>
<dbReference type="GO" id="GO:0070006">
    <property type="term" value="F:metalloaminopeptidase activity"/>
    <property type="evidence" value="ECO:0007669"/>
    <property type="project" value="InterPro"/>
</dbReference>
<dbReference type="GO" id="GO:0001073">
    <property type="term" value="F:transcription antitermination factor activity, DNA binding"/>
    <property type="evidence" value="ECO:0000315"/>
    <property type="project" value="EcoliWiki"/>
</dbReference>
<dbReference type="GO" id="GO:0006351">
    <property type="term" value="P:DNA-templated transcription"/>
    <property type="evidence" value="ECO:0000314"/>
    <property type="project" value="EcoCyc"/>
</dbReference>
<dbReference type="GO" id="GO:0043171">
    <property type="term" value="P:peptide catabolic process"/>
    <property type="evidence" value="ECO:0000315"/>
    <property type="project" value="EcoliWiki"/>
</dbReference>
<dbReference type="GO" id="GO:0006276">
    <property type="term" value="P:plasmid maintenance"/>
    <property type="evidence" value="ECO:0000315"/>
    <property type="project" value="EcoliWiki"/>
</dbReference>
<dbReference type="GO" id="GO:0042150">
    <property type="term" value="P:plasmid recombination"/>
    <property type="evidence" value="ECO:0000315"/>
    <property type="project" value="EcoliWiki"/>
</dbReference>
<dbReference type="GO" id="GO:0006508">
    <property type="term" value="P:proteolysis"/>
    <property type="evidence" value="ECO:0000318"/>
    <property type="project" value="GO_Central"/>
</dbReference>
<dbReference type="CDD" id="cd00433">
    <property type="entry name" value="Peptidase_M17"/>
    <property type="match status" value="1"/>
</dbReference>
<dbReference type="FunFam" id="3.40.220.10:FF:000001">
    <property type="entry name" value="Probable cytosol aminopeptidase"/>
    <property type="match status" value="1"/>
</dbReference>
<dbReference type="FunFam" id="3.40.630.10:FF:000004">
    <property type="entry name" value="Probable cytosol aminopeptidase"/>
    <property type="match status" value="1"/>
</dbReference>
<dbReference type="Gene3D" id="3.40.220.10">
    <property type="entry name" value="Leucine Aminopeptidase, subunit E, domain 1"/>
    <property type="match status" value="1"/>
</dbReference>
<dbReference type="Gene3D" id="3.40.630.10">
    <property type="entry name" value="Zn peptidases"/>
    <property type="match status" value="1"/>
</dbReference>
<dbReference type="HAMAP" id="MF_00181">
    <property type="entry name" value="Cytosol_peptidase_M17"/>
    <property type="match status" value="1"/>
</dbReference>
<dbReference type="InterPro" id="IPR011356">
    <property type="entry name" value="Leucine_aapep/pepB"/>
</dbReference>
<dbReference type="InterPro" id="IPR043472">
    <property type="entry name" value="Macro_dom-like"/>
</dbReference>
<dbReference type="InterPro" id="IPR000819">
    <property type="entry name" value="Peptidase_M17_C"/>
</dbReference>
<dbReference type="InterPro" id="IPR023042">
    <property type="entry name" value="Peptidase_M17_leu_NH2_pept"/>
</dbReference>
<dbReference type="InterPro" id="IPR008283">
    <property type="entry name" value="Peptidase_M17_N"/>
</dbReference>
<dbReference type="NCBIfam" id="NF002072">
    <property type="entry name" value="PRK00913.1-1"/>
    <property type="match status" value="1"/>
</dbReference>
<dbReference type="NCBIfam" id="NF002073">
    <property type="entry name" value="PRK00913.1-2"/>
    <property type="match status" value="1"/>
</dbReference>
<dbReference type="NCBIfam" id="NF002074">
    <property type="entry name" value="PRK00913.1-4"/>
    <property type="match status" value="1"/>
</dbReference>
<dbReference type="PANTHER" id="PTHR11963:SF23">
    <property type="entry name" value="CYTOSOL AMINOPEPTIDASE"/>
    <property type="match status" value="1"/>
</dbReference>
<dbReference type="PANTHER" id="PTHR11963">
    <property type="entry name" value="LEUCINE AMINOPEPTIDASE-RELATED"/>
    <property type="match status" value="1"/>
</dbReference>
<dbReference type="Pfam" id="PF00883">
    <property type="entry name" value="Peptidase_M17"/>
    <property type="match status" value="1"/>
</dbReference>
<dbReference type="Pfam" id="PF02789">
    <property type="entry name" value="Peptidase_M17_N"/>
    <property type="match status" value="1"/>
</dbReference>
<dbReference type="PRINTS" id="PR00481">
    <property type="entry name" value="LAMNOPPTDASE"/>
</dbReference>
<dbReference type="SUPFAM" id="SSF52949">
    <property type="entry name" value="Macro domain-like"/>
    <property type="match status" value="1"/>
</dbReference>
<dbReference type="SUPFAM" id="SSF53187">
    <property type="entry name" value="Zn-dependent exopeptidases"/>
    <property type="match status" value="1"/>
</dbReference>
<dbReference type="PROSITE" id="PS00631">
    <property type="entry name" value="CYTOSOL_AP"/>
    <property type="match status" value="1"/>
</dbReference>
<keyword id="KW-0002">3D-structure</keyword>
<keyword id="KW-0031">Aminopeptidase</keyword>
<keyword id="KW-0903">Direct protein sequencing</keyword>
<keyword id="KW-0378">Hydrolase</keyword>
<keyword id="KW-0464">Manganese</keyword>
<keyword id="KW-0479">Metal-binding</keyword>
<keyword id="KW-0645">Protease</keyword>
<keyword id="KW-1185">Reference proteome</keyword>
<evidence type="ECO:0000250" key="1"/>
<evidence type="ECO:0000255" key="2"/>
<evidence type="ECO:0000269" key="3">
    <source>
    </source>
</evidence>
<evidence type="ECO:0000269" key="4">
    <source>
    </source>
</evidence>
<evidence type="ECO:0000305" key="5"/>
<evidence type="ECO:0000305" key="6">
    <source>
    </source>
</evidence>
<evidence type="ECO:0007829" key="7">
    <source>
        <dbReference type="PDB" id="1GYT"/>
    </source>
</evidence>
<accession>P68767</accession>
<accession>P11648</accession>
<accession>Q2M649</accession>
<feature type="chain" id="PRO_0000165750" description="Cytosol aminopeptidase">
    <location>
        <begin position="1"/>
        <end position="503"/>
    </location>
</feature>
<feature type="active site" evidence="2">
    <location>
        <position position="282"/>
    </location>
</feature>
<feature type="active site" evidence="2">
    <location>
        <position position="356"/>
    </location>
</feature>
<feature type="binding site" evidence="5">
    <location>
        <position position="270"/>
    </location>
    <ligand>
        <name>Mn(2+)</name>
        <dbReference type="ChEBI" id="CHEBI:29035"/>
        <label>2</label>
    </ligand>
</feature>
<feature type="binding site" evidence="5">
    <location>
        <position position="275"/>
    </location>
    <ligand>
        <name>Mn(2+)</name>
        <dbReference type="ChEBI" id="CHEBI:29035"/>
        <label>1</label>
    </ligand>
</feature>
<feature type="binding site" evidence="5">
    <location>
        <position position="275"/>
    </location>
    <ligand>
        <name>Mn(2+)</name>
        <dbReference type="ChEBI" id="CHEBI:29035"/>
        <label>2</label>
    </ligand>
</feature>
<feature type="binding site" evidence="5">
    <location>
        <position position="293"/>
    </location>
    <ligand>
        <name>Mn(2+)</name>
        <dbReference type="ChEBI" id="CHEBI:29035"/>
        <label>2</label>
    </ligand>
</feature>
<feature type="binding site" evidence="5">
    <location>
        <position position="352"/>
    </location>
    <ligand>
        <name>Mn(2+)</name>
        <dbReference type="ChEBI" id="CHEBI:29035"/>
        <label>1</label>
    </ligand>
</feature>
<feature type="binding site" evidence="5">
    <location>
        <position position="354"/>
    </location>
    <ligand>
        <name>Mn(2+)</name>
        <dbReference type="ChEBI" id="CHEBI:29035"/>
        <label>1</label>
    </ligand>
</feature>
<feature type="binding site" evidence="5">
    <location>
        <position position="354"/>
    </location>
    <ligand>
        <name>Mn(2+)</name>
        <dbReference type="ChEBI" id="CHEBI:29035"/>
        <label>2</label>
    </ligand>
</feature>
<feature type="mutagenesis site" description="Loss of activity." evidence="4">
    <original>E</original>
    <variation>A</variation>
    <location>
        <position position="354"/>
    </location>
</feature>
<feature type="strand" evidence="7">
    <location>
        <begin position="2"/>
        <end position="6"/>
    </location>
</feature>
<feature type="helix" evidence="7">
    <location>
        <begin position="10"/>
        <end position="12"/>
    </location>
</feature>
<feature type="strand" evidence="7">
    <location>
        <begin position="18"/>
        <end position="23"/>
    </location>
</feature>
<feature type="turn" evidence="7">
    <location>
        <begin position="24"/>
        <end position="26"/>
    </location>
</feature>
<feature type="helix" evidence="7">
    <location>
        <begin position="30"/>
        <end position="36"/>
    </location>
</feature>
<feature type="strand" evidence="7">
    <location>
        <begin position="39"/>
        <end position="41"/>
    </location>
</feature>
<feature type="helix" evidence="7">
    <location>
        <begin position="42"/>
        <end position="49"/>
    </location>
</feature>
<feature type="strand" evidence="7">
    <location>
        <begin position="59"/>
        <end position="64"/>
    </location>
</feature>
<feature type="strand" evidence="7">
    <location>
        <begin position="69"/>
        <end position="77"/>
    </location>
</feature>
<feature type="helix" evidence="7">
    <location>
        <begin position="86"/>
        <end position="102"/>
    </location>
</feature>
<feature type="strand" evidence="7">
    <location>
        <begin position="106"/>
        <end position="110"/>
    </location>
</feature>
<feature type="helix" evidence="7">
    <location>
        <begin position="112"/>
        <end position="114"/>
    </location>
</feature>
<feature type="helix" evidence="7">
    <location>
        <begin position="122"/>
        <end position="137"/>
    </location>
</feature>
<feature type="strand" evidence="7">
    <location>
        <begin position="156"/>
        <end position="160"/>
    </location>
</feature>
<feature type="helix" evidence="7">
    <location>
        <begin position="164"/>
        <end position="166"/>
    </location>
</feature>
<feature type="helix" evidence="7">
    <location>
        <begin position="167"/>
        <end position="192"/>
    </location>
</feature>
<feature type="turn" evidence="7">
    <location>
        <begin position="195"/>
        <end position="197"/>
    </location>
</feature>
<feature type="helix" evidence="7">
    <location>
        <begin position="200"/>
        <end position="213"/>
    </location>
</feature>
<feature type="turn" evidence="7">
    <location>
        <begin position="214"/>
        <end position="217"/>
    </location>
</feature>
<feature type="strand" evidence="7">
    <location>
        <begin position="218"/>
        <end position="223"/>
    </location>
</feature>
<feature type="helix" evidence="7">
    <location>
        <begin position="225"/>
        <end position="230"/>
    </location>
</feature>
<feature type="helix" evidence="7">
    <location>
        <begin position="234"/>
        <end position="241"/>
    </location>
</feature>
<feature type="strand" evidence="7">
    <location>
        <begin position="243"/>
        <end position="245"/>
    </location>
</feature>
<feature type="strand" evidence="7">
    <location>
        <begin position="248"/>
        <end position="255"/>
    </location>
</feature>
<feature type="strand" evidence="7">
    <location>
        <begin position="265"/>
        <end position="275"/>
    </location>
</feature>
<feature type="helix" evidence="7">
    <location>
        <begin position="287"/>
        <end position="294"/>
    </location>
</feature>
<feature type="helix" evidence="7">
    <location>
        <begin position="295"/>
        <end position="310"/>
    </location>
</feature>
<feature type="strand" evidence="7">
    <location>
        <begin position="313"/>
        <end position="325"/>
    </location>
</feature>
<feature type="strand" evidence="7">
    <location>
        <begin position="337"/>
        <end position="339"/>
    </location>
</feature>
<feature type="strand" evidence="7">
    <location>
        <begin position="345"/>
        <end position="347"/>
    </location>
</feature>
<feature type="helix" evidence="7">
    <location>
        <begin position="355"/>
        <end position="365"/>
    </location>
</feature>
<feature type="helix" evidence="7">
    <location>
        <begin position="366"/>
        <end position="369"/>
    </location>
</feature>
<feature type="strand" evidence="7">
    <location>
        <begin position="372"/>
        <end position="378"/>
    </location>
</feature>
<feature type="helix" evidence="7">
    <location>
        <begin position="382"/>
        <end position="388"/>
    </location>
</feature>
<feature type="turn" evidence="7">
    <location>
        <begin position="389"/>
        <end position="391"/>
    </location>
</feature>
<feature type="strand" evidence="7">
    <location>
        <begin position="392"/>
        <end position="398"/>
    </location>
</feature>
<feature type="helix" evidence="7">
    <location>
        <begin position="400"/>
        <end position="413"/>
    </location>
</feature>
<feature type="strand" evidence="7">
    <location>
        <begin position="417"/>
        <end position="419"/>
    </location>
</feature>
<feature type="helix" evidence="7">
    <location>
        <begin position="424"/>
        <end position="427"/>
    </location>
</feature>
<feature type="helix" evidence="7">
    <location>
        <begin position="428"/>
        <end position="430"/>
    </location>
</feature>
<feature type="strand" evidence="7">
    <location>
        <begin position="433"/>
        <end position="439"/>
    </location>
</feature>
<feature type="helix" evidence="7">
    <location>
        <begin position="446"/>
        <end position="455"/>
    </location>
</feature>
<feature type="strand" evidence="7">
    <location>
        <begin position="463"/>
        <end position="467"/>
    </location>
</feature>
<feature type="turn" evidence="7">
    <location>
        <begin position="469"/>
        <end position="471"/>
    </location>
</feature>
<feature type="strand" evidence="7">
    <location>
        <begin position="472"/>
        <end position="474"/>
    </location>
</feature>
<feature type="helix" evidence="7">
    <location>
        <begin position="476"/>
        <end position="478"/>
    </location>
</feature>
<feature type="helix" evidence="7">
    <location>
        <begin position="486"/>
        <end position="496"/>
    </location>
</feature>
<organism>
    <name type="scientific">Escherichia coli (strain K12)</name>
    <dbReference type="NCBI Taxonomy" id="83333"/>
    <lineage>
        <taxon>Bacteria</taxon>
        <taxon>Pseudomonadati</taxon>
        <taxon>Pseudomonadota</taxon>
        <taxon>Gammaproteobacteria</taxon>
        <taxon>Enterobacterales</taxon>
        <taxon>Enterobacteriaceae</taxon>
        <taxon>Escherichia</taxon>
    </lineage>
</organism>
<gene>
    <name type="primary">pepA</name>
    <name type="synonym">carP</name>
    <name type="synonym">xerB</name>
    <name type="ordered locus">b4260</name>
    <name type="ordered locus">JW4217</name>
</gene>
<proteinExistence type="evidence at protein level"/>
<protein>
    <recommendedName>
        <fullName>Cytosol aminopeptidase</fullName>
        <ecNumber>3.4.11.1</ecNumber>
    </recommendedName>
    <alternativeName>
        <fullName>Aminopeptidase A/I</fullName>
    </alternativeName>
    <alternativeName>
        <fullName>Leucine aminopeptidase</fullName>
        <shortName>LAP</shortName>
        <ecNumber>3.4.11.10</ecNumber>
    </alternativeName>
    <alternativeName>
        <fullName>Leucyl aminopeptidase</fullName>
    </alternativeName>
</protein>
<name>AMPA_ECOLI</name>
<comment type="function">
    <text evidence="4 6">Probably involved in the processing and regular turnover of intracellular proteins (PubMed:20067529). Catalyzes the removal of unsubstituted N-terminal amino acids from various peptides. Required for plasmid ColE1 site-specific recombination but not in its aminopeptidase activity. Could act as a structural component of the putative nucleoprotein complex in which the Xer recombination reaction takes place (PubMed:8057849).</text>
</comment>
<comment type="catalytic activity">
    <reaction>
        <text>Release of an N-terminal amino acid, Xaa-|-Yaa-, in which Xaa is preferably Leu, but may be other amino acids including Pro although not Arg or Lys, and Yaa may be Pro. Amino acid amides and methyl esters are also readily hydrolyzed, but rates on arylamides are exceedingly low.</text>
        <dbReference type="EC" id="3.4.11.1"/>
    </reaction>
</comment>
<comment type="catalytic activity">
    <reaction>
        <text>Release of an N-terminal amino acid, preferentially leucine, but not glutamic or aspartic acids.</text>
        <dbReference type="EC" id="3.4.11.10"/>
    </reaction>
</comment>
<comment type="cofactor">
    <cofactor evidence="1">
        <name>Mn(2+)</name>
        <dbReference type="ChEBI" id="CHEBI:29035"/>
    </cofactor>
    <text evidence="1">Binds 2 manganese ions per subunit.</text>
</comment>
<comment type="activity regulation">
    <text>Inhibited by zinc and EDTA.</text>
</comment>
<comment type="subunit">
    <text>Homohexamer.</text>
</comment>
<comment type="disruption phenotype">
    <text evidence="3">A quadruple peptidase disruption (pepA, pepB, pepD and pepN) does not grow in M9 minimal medium, grows better when supplemented with casamino acids (PubMed:20067529).</text>
</comment>
<comment type="similarity">
    <text evidence="5">Belongs to the peptidase M17 family.</text>
</comment>
<comment type="caution">
    <text evidence="5">The ligation for manganese is based on the ligation for zinc, an inhibitor, in the crystallographic structure reported in PubMed:10449417. The ligation for manganese in the active form of the enzyme may differ.</text>
</comment>
<reference key="1">
    <citation type="journal article" date="1989" name="EMBO J.">
        <title>xerB, an Escherichia coli gene required for plasmid ColE1 site-specific recombination, is identical to pepA, encoding aminopeptidase A, a protein with substantial similarity to bovine lens leucine aminopeptidase.</title>
        <authorList>
            <person name="Stirling C.J."/>
            <person name="Colloms S."/>
            <person name="Collins J.F."/>
            <person name="Szatmari G."/>
            <person name="Sherratt D.J."/>
        </authorList>
    </citation>
    <scope>NUCLEOTIDE SEQUENCE [GENOMIC DNA]</scope>
    <scope>PROTEIN SEQUENCE OF 1-20</scope>
    <source>
        <strain>K12</strain>
    </source>
</reference>
<reference key="2">
    <citation type="journal article" date="1995" name="J. Mol. Biol.">
        <title>carP, involved in pyrimidine regulation of the Escherichia coli carbamoylphosphate synthetase operon encodes a sequence-specific DNA-binding protein identical to XerB and PepA, also required for resolution of ColEI multimers.</title>
        <authorList>
            <person name="Charlier D."/>
            <person name="Hassanzadeh G."/>
            <person name="Kholti A."/>
            <person name="Gigot D."/>
            <person name="Pierard A."/>
            <person name="Glansdorff N."/>
        </authorList>
    </citation>
    <scope>NUCLEOTIDE SEQUENCE [GENOMIC DNA]</scope>
    <source>
        <strain>K12</strain>
    </source>
</reference>
<reference key="3">
    <citation type="journal article" date="1995" name="Nucleic Acids Res.">
        <title>Analysis of the Escherichia coli genome VI: DNA sequence of the region from 92.8 through 100 minutes.</title>
        <authorList>
            <person name="Burland V.D."/>
            <person name="Plunkett G. III"/>
            <person name="Sofia H.J."/>
            <person name="Daniels D.L."/>
            <person name="Blattner F.R."/>
        </authorList>
    </citation>
    <scope>NUCLEOTIDE SEQUENCE [LARGE SCALE GENOMIC DNA]</scope>
    <source>
        <strain>K12 / MG1655 / ATCC 47076</strain>
    </source>
</reference>
<reference key="4">
    <citation type="journal article" date="1997" name="Science">
        <title>The complete genome sequence of Escherichia coli K-12.</title>
        <authorList>
            <person name="Blattner F.R."/>
            <person name="Plunkett G. III"/>
            <person name="Bloch C.A."/>
            <person name="Perna N.T."/>
            <person name="Burland V."/>
            <person name="Riley M."/>
            <person name="Collado-Vides J."/>
            <person name="Glasner J.D."/>
            <person name="Rode C.K."/>
            <person name="Mayhew G.F."/>
            <person name="Gregor J."/>
            <person name="Davis N.W."/>
            <person name="Kirkpatrick H.A."/>
            <person name="Goeden M.A."/>
            <person name="Rose D.J."/>
            <person name="Mau B."/>
            <person name="Shao Y."/>
        </authorList>
    </citation>
    <scope>NUCLEOTIDE SEQUENCE [LARGE SCALE GENOMIC DNA]</scope>
    <source>
        <strain>K12 / MG1655 / ATCC 47076</strain>
    </source>
</reference>
<reference key="5">
    <citation type="journal article" date="2006" name="Mol. Syst. Biol.">
        <title>Highly accurate genome sequences of Escherichia coli K-12 strains MG1655 and W3110.</title>
        <authorList>
            <person name="Hayashi K."/>
            <person name="Morooka N."/>
            <person name="Yamamoto Y."/>
            <person name="Fujita K."/>
            <person name="Isono K."/>
            <person name="Choi S."/>
            <person name="Ohtsubo E."/>
            <person name="Baba T."/>
            <person name="Wanner B.L."/>
            <person name="Mori H."/>
            <person name="Horiuchi T."/>
        </authorList>
    </citation>
    <scope>NUCLEOTIDE SEQUENCE [LARGE SCALE GENOMIC DNA]</scope>
    <source>
        <strain>K12 / W3110 / ATCC 27325 / DSM 5911</strain>
    </source>
</reference>
<reference key="6">
    <citation type="journal article" date="1994" name="Mol. Microbiol.">
        <title>Peptidase activity of Escherichia coli aminopeptidase A is not required for its role in Xer site-specific recombination.</title>
        <authorList>
            <person name="McCulloch R."/>
            <person name="Burke M.E."/>
            <person name="Sherratt D.J."/>
        </authorList>
    </citation>
    <scope>MUTAGENESIS OF GLU-354</scope>
</reference>
<reference key="7">
    <citation type="journal article" date="2010" name="FEMS Microbiol. Lett.">
        <title>Effect of multidrug-efflux transporter genes on dipeptide resistance and overproduction in Escherichia coli.</title>
        <authorList>
            <person name="Hayashi M."/>
            <person name="Tabata K."/>
            <person name="Yagasaki M."/>
            <person name="Yonetani Y."/>
        </authorList>
    </citation>
    <scope>FUNCTION IN PEPTIDE DEGRADATION</scope>
    <scope>DISRUPTION PHENOTYPE</scope>
    <source>
        <strain>K12 / JM101 / ATCC 33876 / DSM 3948 / NCIMB 11926</strain>
    </source>
</reference>
<reference key="8">
    <citation type="journal article" date="1999" name="EMBO J.">
        <title>X-ray structure of aminopeptidase A from Escherichia coli and a model for the nucleoprotein complex in Xer site-specific recombination.</title>
        <authorList>
            <person name="Strater N."/>
            <person name="Sherratt D.J."/>
            <person name="Colloms S.D."/>
        </authorList>
    </citation>
    <scope>X-RAY CRYSTALLOGRAPHY (2.5 ANGSTROMS)</scope>
</reference>